<reference key="1">
    <citation type="journal article" date="1998" name="Res. Microbiol.">
        <title>The 16-kDa alpha-crystallin-like protein of Mycobacterium bovis BCG is produced under conditions of oxygen deficiency and is associated with ribosomes.</title>
        <authorList>
            <person name="Tabira Y."/>
            <person name="Ohara N."/>
            <person name="Kitaura H."/>
            <person name="Matsumoto S."/>
            <person name="Naito M."/>
            <person name="Yamada T."/>
        </authorList>
    </citation>
    <scope>NUCLEOTIDE SEQUENCE [GENOMIC DNA]</scope>
    <scope>SUBCELLULAR LOCATION</scope>
    <scope>INDUCTION</scope>
    <source>
        <strain>BCG / Tokyo</strain>
    </source>
</reference>
<reference key="2">
    <citation type="journal article" date="2003" name="Proc. Natl. Acad. Sci. U.S.A.">
        <title>The complete genome sequence of Mycobacterium bovis.</title>
        <authorList>
            <person name="Garnier T."/>
            <person name="Eiglmeier K."/>
            <person name="Camus J.-C."/>
            <person name="Medina N."/>
            <person name="Mansoor H."/>
            <person name="Pryor M."/>
            <person name="Duthoy S."/>
            <person name="Grondin S."/>
            <person name="Lacroix C."/>
            <person name="Monsempe C."/>
            <person name="Simon S."/>
            <person name="Harris B."/>
            <person name="Atkin R."/>
            <person name="Doggett J."/>
            <person name="Mayes R."/>
            <person name="Keating L."/>
            <person name="Wheeler P.R."/>
            <person name="Parkhill J."/>
            <person name="Barrell B.G."/>
            <person name="Cole S.T."/>
            <person name="Gordon S.V."/>
            <person name="Hewinson R.G."/>
        </authorList>
    </citation>
    <scope>NUCLEOTIDE SEQUENCE [LARGE SCALE GENOMIC DNA]</scope>
    <source>
        <strain>ATCC BAA-935 / AF2122/97</strain>
    </source>
</reference>
<reference key="3">
    <citation type="journal article" date="2017" name="Genome Announc.">
        <title>Updated reference genome sequence and annotation of Mycobacterium bovis AF2122/97.</title>
        <authorList>
            <person name="Malone K.M."/>
            <person name="Farrell D."/>
            <person name="Stuber T.P."/>
            <person name="Schubert O.T."/>
            <person name="Aebersold R."/>
            <person name="Robbe-Austerman S."/>
            <person name="Gordon S.V."/>
        </authorList>
    </citation>
    <scope>NUCLEOTIDE SEQUENCE [LARGE SCALE GENOMIC DNA]</scope>
    <scope>GENOME REANNOTATION</scope>
    <source>
        <strain>ATCC BAA-935 / AF2122/97</strain>
    </source>
</reference>
<reference key="4">
    <citation type="journal article" date="1993" name="Infect. Immun.">
        <title>Immunological properties of ribosomal proteins from Mycobacterium bovis BCG.</title>
        <authorList>
            <person name="Tantimavanich S."/>
            <person name="Nagai S."/>
            <person name="Nomaguchi H."/>
            <person name="Kinomoto M."/>
            <person name="Ohara N."/>
            <person name="Yamada T."/>
        </authorList>
    </citation>
    <scope>PROTEIN SEQUENCE OF 2-11</scope>
    <scope>SUBCELLULAR LOCATION</scope>
    <source>
        <strain>BCG / Tokyo</strain>
    </source>
</reference>
<sequence>MATTLPVQRHPRSLFPEFSELFAAFPSFAGLRPTFDTRLMRLEDEMKEGRYEVRAELPGVDPDKDVDIMVRDGQLTIKAERTEQKDFDGRSEFAYGSFVRTVSLPVGADEDDIKATYDKGILTVSVAVSEGKPTEKHIQIRSTN</sequence>
<proteinExistence type="evidence at protein level"/>
<evidence type="ECO:0000250" key="1">
    <source>
        <dbReference type="UniProtKB" id="P9WMK1"/>
    </source>
</evidence>
<evidence type="ECO:0000255" key="2">
    <source>
        <dbReference type="PROSITE-ProRule" id="PRU00285"/>
    </source>
</evidence>
<evidence type="ECO:0000269" key="3">
    <source>
    </source>
</evidence>
<evidence type="ECO:0000269" key="4">
    <source>
    </source>
</evidence>
<evidence type="ECO:0000303" key="5">
    <source>
    </source>
</evidence>
<evidence type="ECO:0000305" key="6"/>
<keyword id="KW-0134">Cell wall</keyword>
<keyword id="KW-0143">Chaperone</keyword>
<keyword id="KW-0963">Cytoplasm</keyword>
<keyword id="KW-0903">Direct protein sequencing</keyword>
<keyword id="KW-1185">Reference proteome</keyword>
<keyword id="KW-0964">Secreted</keyword>
<comment type="function">
    <text evidence="1">Acts as a chaperone.</text>
</comment>
<comment type="subcellular location">
    <subcellularLocation>
        <location evidence="4">Secreted</location>
        <location evidence="4">Cell wall</location>
    </subcellularLocation>
    <subcellularLocation>
        <location evidence="3 4">Cytoplasm</location>
    </subcellularLocation>
    <text evidence="1 3 4">Associates tightly with 30S ribosome subunits (PubMed:8359926, PubMed:9766227). Probably on the external side of the cell wall (By similarity).</text>
</comment>
<comment type="induction">
    <text evidence="4">Present in cells grown on plates but not in those grown in shaken liquid culture (at protein level). Induced in the absence of oxygen (hypoxia) (at protein level).</text>
</comment>
<comment type="similarity">
    <text evidence="2">Belongs to the small heat shock protein (HSP20) family.</text>
</comment>
<dbReference type="EMBL" id="AB005789">
    <property type="protein sequence ID" value="BAF79634.1"/>
    <property type="molecule type" value="Genomic_DNA"/>
</dbReference>
<dbReference type="EMBL" id="LT708304">
    <property type="protein sequence ID" value="SIU00664.1"/>
    <property type="molecule type" value="Genomic_DNA"/>
</dbReference>
<dbReference type="RefSeq" id="NP_855707.1">
    <property type="nucleotide sequence ID" value="NC_002945.3"/>
</dbReference>
<dbReference type="RefSeq" id="WP_003410189.1">
    <property type="nucleotide sequence ID" value="NC_002945.4"/>
</dbReference>
<dbReference type="SMR" id="P0A5B8"/>
<dbReference type="KEGG" id="mbo:BQ2027_MB2057C"/>
<dbReference type="PATRIC" id="fig|1765.299.peg.2266"/>
<dbReference type="Proteomes" id="UP000001419">
    <property type="component" value="Chromosome"/>
</dbReference>
<dbReference type="GO" id="GO:0005737">
    <property type="term" value="C:cytoplasm"/>
    <property type="evidence" value="ECO:0007669"/>
    <property type="project" value="UniProtKB-SubCell"/>
</dbReference>
<dbReference type="GO" id="GO:0005576">
    <property type="term" value="C:extracellular region"/>
    <property type="evidence" value="ECO:0007669"/>
    <property type="project" value="UniProtKB-KW"/>
</dbReference>
<dbReference type="CDD" id="cd06464">
    <property type="entry name" value="ACD_sHsps-like"/>
    <property type="match status" value="1"/>
</dbReference>
<dbReference type="Gene3D" id="2.60.40.790">
    <property type="match status" value="1"/>
</dbReference>
<dbReference type="InterPro" id="IPR002068">
    <property type="entry name" value="A-crystallin/Hsp20_dom"/>
</dbReference>
<dbReference type="InterPro" id="IPR008978">
    <property type="entry name" value="HSP20-like_chaperone"/>
</dbReference>
<dbReference type="InterPro" id="IPR031107">
    <property type="entry name" value="Small_HSP"/>
</dbReference>
<dbReference type="PANTHER" id="PTHR11527">
    <property type="entry name" value="HEAT-SHOCK PROTEIN 20 FAMILY MEMBER"/>
    <property type="match status" value="1"/>
</dbReference>
<dbReference type="Pfam" id="PF00011">
    <property type="entry name" value="HSP20"/>
    <property type="match status" value="1"/>
</dbReference>
<dbReference type="SUPFAM" id="SSF49764">
    <property type="entry name" value="HSP20-like chaperones"/>
    <property type="match status" value="1"/>
</dbReference>
<dbReference type="PROSITE" id="PS01031">
    <property type="entry name" value="SHSP"/>
    <property type="match status" value="1"/>
</dbReference>
<organism>
    <name type="scientific">Mycobacterium bovis (strain ATCC BAA-935 / AF2122/97)</name>
    <dbReference type="NCBI Taxonomy" id="233413"/>
    <lineage>
        <taxon>Bacteria</taxon>
        <taxon>Bacillati</taxon>
        <taxon>Actinomycetota</taxon>
        <taxon>Actinomycetes</taxon>
        <taxon>Mycobacteriales</taxon>
        <taxon>Mycobacteriaceae</taxon>
        <taxon>Mycobacterium</taxon>
        <taxon>Mycobacterium tuberculosis complex</taxon>
    </lineage>
</organism>
<gene>
    <name type="primary">hspX</name>
    <name type="synonym">acr</name>
    <name type="ordered locus">BQ2027_MB2057C</name>
</gene>
<feature type="initiator methionine" description="Removed" evidence="3">
    <location>
        <position position="1"/>
    </location>
</feature>
<feature type="chain" id="PRO_0000126010" description="Alpha-crystallin">
    <location>
        <begin position="2"/>
        <end position="144"/>
    </location>
</feature>
<feature type="domain" description="sHSP" evidence="2">
    <location>
        <begin position="33"/>
        <end position="143"/>
    </location>
</feature>
<feature type="sequence conflict" description="In Ref. 4; AA sequence." evidence="6" ref="4">
    <original>RH</original>
    <variation>D</variation>
    <location>
        <begin position="9"/>
        <end position="10"/>
    </location>
</feature>
<protein>
    <recommendedName>
        <fullName evidence="5">Alpha-crystallin</fullName>
        <shortName>Acr</shortName>
    </recommendedName>
    <alternativeName>
        <fullName>14 kDa antigen</fullName>
    </alternativeName>
    <alternativeName>
        <fullName>16 kDa antigen</fullName>
    </alternativeName>
    <alternativeName>
        <fullName>HSP 16.3</fullName>
    </alternativeName>
</protein>
<accession>P0A5B8</accession>
<accession>A0A1R3Y251</accession>
<accession>A7VJB3</accession>
<accession>P30223</accession>
<accession>X2BJK6</accession>
<name>ACR_MYCBO</name>